<reference key="1">
    <citation type="journal article" date="2009" name="Proc. Natl. Acad. Sci. U.S.A.">
        <title>The genomic basis of trophic strategy in marine bacteria.</title>
        <authorList>
            <person name="Lauro F.M."/>
            <person name="McDougald D."/>
            <person name="Thomas T."/>
            <person name="Williams T.J."/>
            <person name="Egan S."/>
            <person name="Rice S."/>
            <person name="DeMaere M.Z."/>
            <person name="Ting L."/>
            <person name="Ertan H."/>
            <person name="Johnson J."/>
            <person name="Ferriera S."/>
            <person name="Lapidus A."/>
            <person name="Anderson I."/>
            <person name="Kyrpides N."/>
            <person name="Munk A.C."/>
            <person name="Detter C."/>
            <person name="Han C.S."/>
            <person name="Brown M.V."/>
            <person name="Robb F.T."/>
            <person name="Kjelleberg S."/>
            <person name="Cavicchioli R."/>
        </authorList>
    </citation>
    <scope>NUCLEOTIDE SEQUENCE [LARGE SCALE GENOMIC DNA]</scope>
    <source>
        <strain>DSM 13593 / LMG 18877 / RB2256</strain>
    </source>
</reference>
<accession>Q1GPI7</accession>
<organism>
    <name type="scientific">Sphingopyxis alaskensis (strain DSM 13593 / LMG 18877 / RB2256)</name>
    <name type="common">Sphingomonas alaskensis</name>
    <dbReference type="NCBI Taxonomy" id="317655"/>
    <lineage>
        <taxon>Bacteria</taxon>
        <taxon>Pseudomonadati</taxon>
        <taxon>Pseudomonadota</taxon>
        <taxon>Alphaproteobacteria</taxon>
        <taxon>Sphingomonadales</taxon>
        <taxon>Sphingomonadaceae</taxon>
        <taxon>Sphingopyxis</taxon>
    </lineage>
</organism>
<comment type="function">
    <text evidence="1">Catalyzes the stereoinversion of LL-2,6-diaminopimelate (L,L-DAP) to meso-diaminopimelate (meso-DAP), a precursor of L-lysine and an essential component of the bacterial peptidoglycan.</text>
</comment>
<comment type="catalytic activity">
    <reaction evidence="1">
        <text>(2S,6S)-2,6-diaminopimelate = meso-2,6-diaminopimelate</text>
        <dbReference type="Rhea" id="RHEA:15393"/>
        <dbReference type="ChEBI" id="CHEBI:57609"/>
        <dbReference type="ChEBI" id="CHEBI:57791"/>
        <dbReference type="EC" id="5.1.1.7"/>
    </reaction>
</comment>
<comment type="pathway">
    <text evidence="1">Amino-acid biosynthesis; L-lysine biosynthesis via DAP pathway; DL-2,6-diaminopimelate from LL-2,6-diaminopimelate: step 1/1.</text>
</comment>
<comment type="subunit">
    <text evidence="1">Homodimer.</text>
</comment>
<comment type="subcellular location">
    <subcellularLocation>
        <location evidence="1">Cytoplasm</location>
    </subcellularLocation>
</comment>
<comment type="similarity">
    <text evidence="1">Belongs to the diaminopimelate epimerase family.</text>
</comment>
<feature type="chain" id="PRO_1000011972" description="Diaminopimelate epimerase">
    <location>
        <begin position="1"/>
        <end position="268"/>
    </location>
</feature>
<feature type="active site" description="Proton donor" evidence="1">
    <location>
        <position position="73"/>
    </location>
</feature>
<feature type="active site" description="Proton acceptor" evidence="1">
    <location>
        <position position="208"/>
    </location>
</feature>
<feature type="binding site" evidence="1">
    <location>
        <position position="13"/>
    </location>
    <ligand>
        <name>substrate</name>
    </ligand>
</feature>
<feature type="binding site" evidence="1">
    <location>
        <position position="46"/>
    </location>
    <ligand>
        <name>substrate</name>
    </ligand>
</feature>
<feature type="binding site" evidence="1">
    <location>
        <position position="64"/>
    </location>
    <ligand>
        <name>substrate</name>
    </ligand>
</feature>
<feature type="binding site" evidence="1">
    <location>
        <begin position="74"/>
        <end position="75"/>
    </location>
    <ligand>
        <name>substrate</name>
    </ligand>
</feature>
<feature type="binding site" evidence="1">
    <location>
        <position position="148"/>
    </location>
    <ligand>
        <name>substrate</name>
    </ligand>
</feature>
<feature type="binding site" evidence="1">
    <location>
        <position position="181"/>
    </location>
    <ligand>
        <name>substrate</name>
    </ligand>
</feature>
<feature type="binding site" evidence="1">
    <location>
        <begin position="199"/>
        <end position="200"/>
    </location>
    <ligand>
        <name>substrate</name>
    </ligand>
</feature>
<feature type="binding site" evidence="1">
    <location>
        <begin position="209"/>
        <end position="210"/>
    </location>
    <ligand>
        <name>substrate</name>
    </ligand>
</feature>
<feature type="site" description="Could be important to modulate the pK values of the two catalytic cysteine residues" evidence="1">
    <location>
        <position position="150"/>
    </location>
</feature>
<feature type="site" description="Could be important to modulate the pK values of the two catalytic cysteine residues" evidence="1">
    <location>
        <position position="199"/>
    </location>
</feature>
<dbReference type="EC" id="5.1.1.7" evidence="1"/>
<dbReference type="EMBL" id="CP000356">
    <property type="protein sequence ID" value="ABF54435.1"/>
    <property type="molecule type" value="Genomic_DNA"/>
</dbReference>
<dbReference type="RefSeq" id="WP_011543000.1">
    <property type="nucleotide sequence ID" value="NC_008048.1"/>
</dbReference>
<dbReference type="SMR" id="Q1GPI7"/>
<dbReference type="STRING" id="317655.Sala_2730"/>
<dbReference type="KEGG" id="sal:Sala_2730"/>
<dbReference type="eggNOG" id="COG0253">
    <property type="taxonomic scope" value="Bacteria"/>
</dbReference>
<dbReference type="HOGENOM" id="CLU_053306_1_0_5"/>
<dbReference type="OrthoDB" id="9805408at2"/>
<dbReference type="UniPathway" id="UPA00034">
    <property type="reaction ID" value="UER00025"/>
</dbReference>
<dbReference type="Proteomes" id="UP000006578">
    <property type="component" value="Chromosome"/>
</dbReference>
<dbReference type="GO" id="GO:0005829">
    <property type="term" value="C:cytosol"/>
    <property type="evidence" value="ECO:0007669"/>
    <property type="project" value="TreeGrafter"/>
</dbReference>
<dbReference type="GO" id="GO:0008837">
    <property type="term" value="F:diaminopimelate epimerase activity"/>
    <property type="evidence" value="ECO:0007669"/>
    <property type="project" value="UniProtKB-UniRule"/>
</dbReference>
<dbReference type="GO" id="GO:0009089">
    <property type="term" value="P:lysine biosynthetic process via diaminopimelate"/>
    <property type="evidence" value="ECO:0007669"/>
    <property type="project" value="UniProtKB-UniRule"/>
</dbReference>
<dbReference type="Gene3D" id="3.10.310.10">
    <property type="entry name" value="Diaminopimelate Epimerase, Chain A, domain 1"/>
    <property type="match status" value="2"/>
</dbReference>
<dbReference type="HAMAP" id="MF_00197">
    <property type="entry name" value="DAP_epimerase"/>
    <property type="match status" value="1"/>
</dbReference>
<dbReference type="InterPro" id="IPR018510">
    <property type="entry name" value="DAP_epimerase_AS"/>
</dbReference>
<dbReference type="InterPro" id="IPR001653">
    <property type="entry name" value="DAP_epimerase_DapF"/>
</dbReference>
<dbReference type="NCBIfam" id="TIGR00652">
    <property type="entry name" value="DapF"/>
    <property type="match status" value="1"/>
</dbReference>
<dbReference type="PANTHER" id="PTHR31689:SF0">
    <property type="entry name" value="DIAMINOPIMELATE EPIMERASE"/>
    <property type="match status" value="1"/>
</dbReference>
<dbReference type="PANTHER" id="PTHR31689">
    <property type="entry name" value="DIAMINOPIMELATE EPIMERASE, CHLOROPLASTIC"/>
    <property type="match status" value="1"/>
</dbReference>
<dbReference type="Pfam" id="PF01678">
    <property type="entry name" value="DAP_epimerase"/>
    <property type="match status" value="2"/>
</dbReference>
<dbReference type="SUPFAM" id="SSF54506">
    <property type="entry name" value="Diaminopimelate epimerase-like"/>
    <property type="match status" value="2"/>
</dbReference>
<dbReference type="PROSITE" id="PS01326">
    <property type="entry name" value="DAP_EPIMERASE"/>
    <property type="match status" value="1"/>
</dbReference>
<protein>
    <recommendedName>
        <fullName evidence="1">Diaminopimelate epimerase</fullName>
        <shortName evidence="1">DAP epimerase</shortName>
        <ecNumber evidence="1">5.1.1.7</ecNumber>
    </recommendedName>
    <alternativeName>
        <fullName evidence="1">PLP-independent amino acid racemase</fullName>
    </alternativeName>
</protein>
<evidence type="ECO:0000255" key="1">
    <source>
        <dbReference type="HAMAP-Rule" id="MF_00197"/>
    </source>
</evidence>
<sequence length="268" mass="28391">MADRFTKMHGLGNDFVVIDARVAPVEMTPARAHAIADRRHGIGCDQLILLEPSTSADVKMRIFNADGGEVEACGNATRCVATLIGKPAVIETLAGMLRVTPADGGAEVTLGEPVFDWDHIPLAMPMDTRDMPVAWDELEHGAAVNVGNPHIVFFVPEADAVALDQLGPRIETDPLFPERVNVNVASLDGENQLQLRVWERGVGLTQACGTGACATAVAAIRAGLVRSPVTVALPGGDLVIRWAPGEPIVMSGAATRVFDGETDWAQFG</sequence>
<gene>
    <name evidence="1" type="primary">dapF</name>
    <name type="ordered locus">Sala_2730</name>
</gene>
<name>DAPF_SPHAL</name>
<keyword id="KW-0028">Amino-acid biosynthesis</keyword>
<keyword id="KW-0963">Cytoplasm</keyword>
<keyword id="KW-0413">Isomerase</keyword>
<keyword id="KW-0457">Lysine biosynthesis</keyword>
<keyword id="KW-1185">Reference proteome</keyword>
<proteinExistence type="inferred from homology"/>